<proteinExistence type="inferred from homology"/>
<sequence length="262" mass="27348">MTTKVAIIGSGNIGTDLMFKIQRLSQTLEVAALVGIDPESDGLQRAGRLGIPITADGVAGLLDIPGFDQISIVFDATSARAHVANAAALEPFGKQLVDLTPAAIGPYVVPAVNLEENLAARNVNMVTCGGQATIPMVAAVSHVAPVAYAEIVASIASRSAGPGTRANIDEFTETTSKAIEVVGGAHRGKAIIVLNPADPPLIMRDTILCLIGDADHDAIRDSVHRRVAEVSEYVPGYRLKQDVQITTVTDDVPLSTLGRVSQ</sequence>
<gene>
    <name type="ordered locus">RHA1_ro10116</name>
</gene>
<feature type="chain" id="PRO_0000387732" description="Acetaldehyde dehydrogenase 7">
    <location>
        <begin position="1"/>
        <end position="262"/>
    </location>
</feature>
<feature type="active site" description="Acyl-thioester intermediate" evidence="1">
    <location>
        <position position="128"/>
    </location>
</feature>
<feature type="binding site" evidence="1">
    <location>
        <begin position="10"/>
        <end position="13"/>
    </location>
    <ligand>
        <name>NAD(+)</name>
        <dbReference type="ChEBI" id="CHEBI:57540"/>
    </ligand>
</feature>
<feature type="binding site" evidence="1">
    <location>
        <begin position="159"/>
        <end position="167"/>
    </location>
    <ligand>
        <name>NAD(+)</name>
        <dbReference type="ChEBI" id="CHEBI:57540"/>
    </ligand>
</feature>
<keyword id="KW-0058">Aromatic hydrocarbons catabolism</keyword>
<keyword id="KW-0520">NAD</keyword>
<keyword id="KW-0560">Oxidoreductase</keyword>
<keyword id="KW-0614">Plasmid</keyword>
<name>ACDH7_RHOJR</name>
<protein>
    <recommendedName>
        <fullName evidence="1">Acetaldehyde dehydrogenase 7</fullName>
        <ecNumber evidence="1">1.2.1.10</ecNumber>
    </recommendedName>
    <alternativeName>
        <fullName evidence="1">Acetaldehyde dehydrogenase [acetylating] 7</fullName>
    </alternativeName>
</protein>
<evidence type="ECO:0000255" key="1">
    <source>
        <dbReference type="HAMAP-Rule" id="MF_01657"/>
    </source>
</evidence>
<geneLocation type="plasmid">
    <name>pRHL2</name>
</geneLocation>
<accession>Q0RWM7</accession>
<reference key="1">
    <citation type="journal article" date="2006" name="Proc. Natl. Acad. Sci. U.S.A.">
        <title>The complete genome of Rhodococcus sp. RHA1 provides insights into a catabolic powerhouse.</title>
        <authorList>
            <person name="McLeod M.P."/>
            <person name="Warren R.L."/>
            <person name="Hsiao W.W.L."/>
            <person name="Araki N."/>
            <person name="Myhre M."/>
            <person name="Fernandes C."/>
            <person name="Miyazawa D."/>
            <person name="Wong W."/>
            <person name="Lillquist A.L."/>
            <person name="Wang D."/>
            <person name="Dosanjh M."/>
            <person name="Hara H."/>
            <person name="Petrescu A."/>
            <person name="Morin R.D."/>
            <person name="Yang G."/>
            <person name="Stott J.M."/>
            <person name="Schein J.E."/>
            <person name="Shin H."/>
            <person name="Smailus D."/>
            <person name="Siddiqui A.S."/>
            <person name="Marra M.A."/>
            <person name="Jones S.J.M."/>
            <person name="Holt R."/>
            <person name="Brinkman F.S.L."/>
            <person name="Miyauchi K."/>
            <person name="Fukuda M."/>
            <person name="Davies J.E."/>
            <person name="Mohn W.W."/>
            <person name="Eltis L.D."/>
        </authorList>
    </citation>
    <scope>NUCLEOTIDE SEQUENCE [LARGE SCALE GENOMIC DNA]</scope>
    <source>
        <strain>RHA1</strain>
    </source>
</reference>
<dbReference type="EC" id="1.2.1.10" evidence="1"/>
<dbReference type="EMBL" id="CP000433">
    <property type="protein sequence ID" value="ABH00309.1"/>
    <property type="molecule type" value="Genomic_DNA"/>
</dbReference>
<dbReference type="RefSeq" id="WP_011599978.1">
    <property type="nucleotide sequence ID" value="NC_008270.1"/>
</dbReference>
<dbReference type="SMR" id="Q0RWM7"/>
<dbReference type="KEGG" id="rha:RHA1_ro10116"/>
<dbReference type="PATRIC" id="fig|101510.16.peg.8524"/>
<dbReference type="HOGENOM" id="CLU_062208_0_0_11"/>
<dbReference type="OrthoDB" id="9786743at2"/>
<dbReference type="Proteomes" id="UP000008710">
    <property type="component" value="Plasmid pRHL2"/>
</dbReference>
<dbReference type="GO" id="GO:0008774">
    <property type="term" value="F:acetaldehyde dehydrogenase (acetylating) activity"/>
    <property type="evidence" value="ECO:0007669"/>
    <property type="project" value="UniProtKB-UniRule"/>
</dbReference>
<dbReference type="GO" id="GO:0051287">
    <property type="term" value="F:NAD binding"/>
    <property type="evidence" value="ECO:0007669"/>
    <property type="project" value="UniProtKB-UniRule"/>
</dbReference>
<dbReference type="GO" id="GO:0009056">
    <property type="term" value="P:catabolic process"/>
    <property type="evidence" value="ECO:0007669"/>
    <property type="project" value="UniProtKB-KW"/>
</dbReference>
<dbReference type="CDD" id="cd23933">
    <property type="entry name" value="ALDH_C"/>
    <property type="match status" value="1"/>
</dbReference>
<dbReference type="Gene3D" id="3.30.360.10">
    <property type="entry name" value="Dihydrodipicolinate Reductase, domain 2"/>
    <property type="match status" value="1"/>
</dbReference>
<dbReference type="Gene3D" id="3.40.50.720">
    <property type="entry name" value="NAD(P)-binding Rossmann-like Domain"/>
    <property type="match status" value="1"/>
</dbReference>
<dbReference type="HAMAP" id="MF_01657">
    <property type="entry name" value="Ac_ald_DH_ac"/>
    <property type="match status" value="1"/>
</dbReference>
<dbReference type="InterPro" id="IPR003361">
    <property type="entry name" value="Acetaldehyde_dehydrogenase"/>
</dbReference>
<dbReference type="InterPro" id="IPR015426">
    <property type="entry name" value="Acetylaldehyde_DH_C"/>
</dbReference>
<dbReference type="InterPro" id="IPR036291">
    <property type="entry name" value="NAD(P)-bd_dom_sf"/>
</dbReference>
<dbReference type="InterPro" id="IPR000534">
    <property type="entry name" value="Semialdehyde_DH_NAD-bd"/>
</dbReference>
<dbReference type="NCBIfam" id="TIGR03215">
    <property type="entry name" value="ac_ald_DH_ac"/>
    <property type="match status" value="1"/>
</dbReference>
<dbReference type="NCBIfam" id="NF006157">
    <property type="entry name" value="PRK08300.1"/>
    <property type="match status" value="1"/>
</dbReference>
<dbReference type="Pfam" id="PF09290">
    <property type="entry name" value="AcetDehyd-dimer"/>
    <property type="match status" value="1"/>
</dbReference>
<dbReference type="Pfam" id="PF01118">
    <property type="entry name" value="Semialdhyde_dh"/>
    <property type="match status" value="1"/>
</dbReference>
<dbReference type="PIRSF" id="PIRSF015689">
    <property type="entry name" value="Actaldh_dh_actl"/>
    <property type="match status" value="1"/>
</dbReference>
<dbReference type="SMART" id="SM00859">
    <property type="entry name" value="Semialdhyde_dh"/>
    <property type="match status" value="1"/>
</dbReference>
<dbReference type="SUPFAM" id="SSF55347">
    <property type="entry name" value="Glyceraldehyde-3-phosphate dehydrogenase-like, C-terminal domain"/>
    <property type="match status" value="1"/>
</dbReference>
<dbReference type="SUPFAM" id="SSF51735">
    <property type="entry name" value="NAD(P)-binding Rossmann-fold domains"/>
    <property type="match status" value="1"/>
</dbReference>
<organism>
    <name type="scientific">Rhodococcus jostii (strain RHA1)</name>
    <dbReference type="NCBI Taxonomy" id="101510"/>
    <lineage>
        <taxon>Bacteria</taxon>
        <taxon>Bacillati</taxon>
        <taxon>Actinomycetota</taxon>
        <taxon>Actinomycetes</taxon>
        <taxon>Mycobacteriales</taxon>
        <taxon>Nocardiaceae</taxon>
        <taxon>Rhodococcus</taxon>
    </lineage>
</organism>
<comment type="catalytic activity">
    <reaction evidence="1">
        <text>acetaldehyde + NAD(+) + CoA = acetyl-CoA + NADH + H(+)</text>
        <dbReference type="Rhea" id="RHEA:23288"/>
        <dbReference type="ChEBI" id="CHEBI:15343"/>
        <dbReference type="ChEBI" id="CHEBI:15378"/>
        <dbReference type="ChEBI" id="CHEBI:57287"/>
        <dbReference type="ChEBI" id="CHEBI:57288"/>
        <dbReference type="ChEBI" id="CHEBI:57540"/>
        <dbReference type="ChEBI" id="CHEBI:57945"/>
        <dbReference type="EC" id="1.2.1.10"/>
    </reaction>
</comment>
<comment type="similarity">
    <text evidence="1">Belongs to the acetaldehyde dehydrogenase family.</text>
</comment>